<gene>
    <name evidence="1" type="primary">nqrA</name>
    <name type="ordered locus">PM1328</name>
</gene>
<sequence length="446" mass="48168">MITIKKGLNLPISGSPEQVIRDGNAITEVALLGEEYVGMRPSMKVREGDVVKKGQVLFEDKKNPGVVFTAPASGTVTAIHRGAKRVLQSVVIKIEGNEQITFEKYTTEQLNQLTSEQVRQNLQASGLWTALRTRPFSKVPAVDATPVSIFVNAMDTNPLCADPQVIVQQSAQAFEAGLTVLSRLHEGKVYLCKAANASIPSPSIANLDVKEFAGPHPAGLSGTHIHFIDPVSATKFVWYINYQDVIAVGKLFTTGELDVSRVVSLAGPQVKNPRLVRTVLGANLSQLTANEVKDGENRVISGSVLSGAKAAGPVDYLGRYALQVSVLEEGREKEFLGWIMPGANKYSLSRTVLGHFSKKLFNFTTALNGGERAMVPIGAYERVMPLDIIPTLLLRDLAAGDTDSAQALGCLELDEEDLALCTFVCPGKNEYGPLLRQALDKIEKEG</sequence>
<accession>Q9CLB1</accession>
<dbReference type="EC" id="7.2.1.1" evidence="1"/>
<dbReference type="EMBL" id="AE004439">
    <property type="protein sequence ID" value="AAK03412.1"/>
    <property type="molecule type" value="Genomic_DNA"/>
</dbReference>
<dbReference type="RefSeq" id="WP_010907129.1">
    <property type="nucleotide sequence ID" value="NC_002663.1"/>
</dbReference>
<dbReference type="SMR" id="Q9CLB1"/>
<dbReference type="STRING" id="272843.PM1328"/>
<dbReference type="EnsemblBacteria" id="AAK03412">
    <property type="protein sequence ID" value="AAK03412"/>
    <property type="gene ID" value="PM1328"/>
</dbReference>
<dbReference type="KEGG" id="pmu:PM1328"/>
<dbReference type="PATRIC" id="fig|272843.6.peg.1339"/>
<dbReference type="HOGENOM" id="CLU_046656_0_0_6"/>
<dbReference type="OrthoDB" id="9774536at2"/>
<dbReference type="Proteomes" id="UP000000809">
    <property type="component" value="Chromosome"/>
</dbReference>
<dbReference type="GO" id="GO:0016655">
    <property type="term" value="F:oxidoreductase activity, acting on NAD(P)H, quinone or similar compound as acceptor"/>
    <property type="evidence" value="ECO:0007669"/>
    <property type="project" value="UniProtKB-UniRule"/>
</dbReference>
<dbReference type="GO" id="GO:0006814">
    <property type="term" value="P:sodium ion transport"/>
    <property type="evidence" value="ECO:0007669"/>
    <property type="project" value="UniProtKB-UniRule"/>
</dbReference>
<dbReference type="Gene3D" id="2.40.50.100">
    <property type="match status" value="1"/>
</dbReference>
<dbReference type="HAMAP" id="MF_00425">
    <property type="entry name" value="NqrA"/>
    <property type="match status" value="1"/>
</dbReference>
<dbReference type="InterPro" id="IPR008703">
    <property type="entry name" value="NqrA"/>
</dbReference>
<dbReference type="InterPro" id="IPR056148">
    <property type="entry name" value="NQRA_2nd"/>
</dbReference>
<dbReference type="InterPro" id="IPR022615">
    <property type="entry name" value="NqrA_C_domain"/>
</dbReference>
<dbReference type="InterPro" id="IPR056147">
    <property type="entry name" value="NQRA_N"/>
</dbReference>
<dbReference type="NCBIfam" id="TIGR01936">
    <property type="entry name" value="nqrA"/>
    <property type="match status" value="1"/>
</dbReference>
<dbReference type="NCBIfam" id="NF003759">
    <property type="entry name" value="PRK05352.1-2"/>
    <property type="match status" value="1"/>
</dbReference>
<dbReference type="PANTHER" id="PTHR37839">
    <property type="entry name" value="NA(+)-TRANSLOCATING NADH-QUINONE REDUCTASE SUBUNIT A"/>
    <property type="match status" value="1"/>
</dbReference>
<dbReference type="PANTHER" id="PTHR37839:SF1">
    <property type="entry name" value="NA(+)-TRANSLOCATING NADH-QUINONE REDUCTASE SUBUNIT A"/>
    <property type="match status" value="1"/>
</dbReference>
<dbReference type="Pfam" id="PF24836">
    <property type="entry name" value="NQRA_2nd"/>
    <property type="match status" value="1"/>
</dbReference>
<dbReference type="Pfam" id="PF05896">
    <property type="entry name" value="NQRA_N"/>
    <property type="match status" value="1"/>
</dbReference>
<dbReference type="Pfam" id="PF11973">
    <property type="entry name" value="NQRA_SLBB"/>
    <property type="match status" value="1"/>
</dbReference>
<protein>
    <recommendedName>
        <fullName evidence="1">Na(+)-translocating NADH-quinone reductase subunit A</fullName>
        <shortName evidence="1">Na(+)-NQR subunit A</shortName>
        <shortName evidence="1">Na(+)-translocating NQR subunit A</shortName>
        <ecNumber evidence="1">7.2.1.1</ecNumber>
    </recommendedName>
    <alternativeName>
        <fullName evidence="1">NQR complex subunit A</fullName>
    </alternativeName>
    <alternativeName>
        <fullName evidence="1">NQR-1 subunit A</fullName>
    </alternativeName>
</protein>
<proteinExistence type="inferred from homology"/>
<reference key="1">
    <citation type="journal article" date="2001" name="Proc. Natl. Acad. Sci. U.S.A.">
        <title>Complete genomic sequence of Pasteurella multocida Pm70.</title>
        <authorList>
            <person name="May B.J."/>
            <person name="Zhang Q."/>
            <person name="Li L.L."/>
            <person name="Paustian M.L."/>
            <person name="Whittam T.S."/>
            <person name="Kapur V."/>
        </authorList>
    </citation>
    <scope>NUCLEOTIDE SEQUENCE [LARGE SCALE GENOMIC DNA]</scope>
    <source>
        <strain>Pm70</strain>
    </source>
</reference>
<organism>
    <name type="scientific">Pasteurella multocida (strain Pm70)</name>
    <dbReference type="NCBI Taxonomy" id="272843"/>
    <lineage>
        <taxon>Bacteria</taxon>
        <taxon>Pseudomonadati</taxon>
        <taxon>Pseudomonadota</taxon>
        <taxon>Gammaproteobacteria</taxon>
        <taxon>Pasteurellales</taxon>
        <taxon>Pasteurellaceae</taxon>
        <taxon>Pasteurella</taxon>
    </lineage>
</organism>
<feature type="chain" id="PRO_0000214201" description="Na(+)-translocating NADH-quinone reductase subunit A">
    <location>
        <begin position="1"/>
        <end position="446"/>
    </location>
</feature>
<comment type="function">
    <text evidence="1">NQR complex catalyzes the reduction of ubiquinone-1 to ubiquinol by two successive reactions, coupled with the transport of Na(+) ions from the cytoplasm to the periplasm. NqrA to NqrE are probably involved in the second step, the conversion of ubisemiquinone to ubiquinol.</text>
</comment>
<comment type="catalytic activity">
    <reaction evidence="1">
        <text>a ubiquinone + n Na(+)(in) + NADH + H(+) = a ubiquinol + n Na(+)(out) + NAD(+)</text>
        <dbReference type="Rhea" id="RHEA:47748"/>
        <dbReference type="Rhea" id="RHEA-COMP:9565"/>
        <dbReference type="Rhea" id="RHEA-COMP:9566"/>
        <dbReference type="ChEBI" id="CHEBI:15378"/>
        <dbReference type="ChEBI" id="CHEBI:16389"/>
        <dbReference type="ChEBI" id="CHEBI:17976"/>
        <dbReference type="ChEBI" id="CHEBI:29101"/>
        <dbReference type="ChEBI" id="CHEBI:57540"/>
        <dbReference type="ChEBI" id="CHEBI:57945"/>
        <dbReference type="EC" id="7.2.1.1"/>
    </reaction>
</comment>
<comment type="subunit">
    <text evidence="1">Composed of six subunits; NqrA, NqrB, NqrC, NqrD, NqrE and NqrF.</text>
</comment>
<comment type="similarity">
    <text evidence="1">Belongs to the NqrA family.</text>
</comment>
<keyword id="KW-0406">Ion transport</keyword>
<keyword id="KW-0520">NAD</keyword>
<keyword id="KW-1185">Reference proteome</keyword>
<keyword id="KW-0915">Sodium</keyword>
<keyword id="KW-0739">Sodium transport</keyword>
<keyword id="KW-1278">Translocase</keyword>
<keyword id="KW-0813">Transport</keyword>
<keyword id="KW-0830">Ubiquinone</keyword>
<evidence type="ECO:0000255" key="1">
    <source>
        <dbReference type="HAMAP-Rule" id="MF_00425"/>
    </source>
</evidence>
<name>NQRA_PASMU</name>